<proteinExistence type="inferred from homology"/>
<name>PUR2_DEIRA</name>
<organism>
    <name type="scientific">Deinococcus radiodurans (strain ATCC 13939 / DSM 20539 / JCM 16871 / CCUG 27074 / LMG 4051 / NBRC 15346 / NCIMB 9279 / VKM B-1422 / R1)</name>
    <dbReference type="NCBI Taxonomy" id="243230"/>
    <lineage>
        <taxon>Bacteria</taxon>
        <taxon>Thermotogati</taxon>
        <taxon>Deinococcota</taxon>
        <taxon>Deinococci</taxon>
        <taxon>Deinococcales</taxon>
        <taxon>Deinococcaceae</taxon>
        <taxon>Deinococcus</taxon>
    </lineage>
</organism>
<reference key="1">
    <citation type="journal article" date="1999" name="Science">
        <title>Genome sequence of the radioresistant bacterium Deinococcus radiodurans R1.</title>
        <authorList>
            <person name="White O."/>
            <person name="Eisen J.A."/>
            <person name="Heidelberg J.F."/>
            <person name="Hickey E.K."/>
            <person name="Peterson J.D."/>
            <person name="Dodson R.J."/>
            <person name="Haft D.H."/>
            <person name="Gwinn M.L."/>
            <person name="Nelson W.C."/>
            <person name="Richardson D.L."/>
            <person name="Moffat K.S."/>
            <person name="Qin H."/>
            <person name="Jiang L."/>
            <person name="Pamphile W."/>
            <person name="Crosby M."/>
            <person name="Shen M."/>
            <person name="Vamathevan J.J."/>
            <person name="Lam P."/>
            <person name="McDonald L.A."/>
            <person name="Utterback T.R."/>
            <person name="Zalewski C."/>
            <person name="Makarova K.S."/>
            <person name="Aravind L."/>
            <person name="Daly M.J."/>
            <person name="Minton K.W."/>
            <person name="Fleischmann R.D."/>
            <person name="Ketchum K.A."/>
            <person name="Nelson K.E."/>
            <person name="Salzberg S.L."/>
            <person name="Smith H.O."/>
            <person name="Venter J.C."/>
            <person name="Fraser C.M."/>
        </authorList>
    </citation>
    <scope>NUCLEOTIDE SEQUENCE [LARGE SCALE GENOMIC DNA]</scope>
    <source>
        <strain>ATCC 13939 / DSM 20539 / JCM 16871 / CCUG 27074 / LMG 4051 / NBRC 15346 / NCIMB 9279 / VKM B-1422 / R1</strain>
    </source>
</reference>
<feature type="chain" id="PRO_0000151447" description="Phosphoribosylamine--glycine ligase">
    <location>
        <begin position="1"/>
        <end position="415"/>
    </location>
</feature>
<feature type="domain" description="ATP-grasp" evidence="2">
    <location>
        <begin position="104"/>
        <end position="304"/>
    </location>
</feature>
<feature type="binding site" evidence="2">
    <location>
        <begin position="130"/>
        <end position="186"/>
    </location>
    <ligand>
        <name>ATP</name>
        <dbReference type="ChEBI" id="CHEBI:30616"/>
    </ligand>
</feature>
<feature type="binding site" evidence="2">
    <location>
        <position position="274"/>
    </location>
    <ligand>
        <name>Mg(2+)</name>
        <dbReference type="ChEBI" id="CHEBI:18420"/>
    </ligand>
</feature>
<feature type="binding site" evidence="2">
    <location>
        <position position="276"/>
    </location>
    <ligand>
        <name>Mg(2+)</name>
        <dbReference type="ChEBI" id="CHEBI:18420"/>
    </ligand>
</feature>
<evidence type="ECO:0000250" key="1"/>
<evidence type="ECO:0000255" key="2">
    <source>
        <dbReference type="HAMAP-Rule" id="MF_00138"/>
    </source>
</evidence>
<evidence type="ECO:0000305" key="3"/>
<accession>Q9RUF5</accession>
<dbReference type="EC" id="6.3.4.13" evidence="2"/>
<dbReference type="EMBL" id="AE000513">
    <property type="protein sequence ID" value="AAF10999.1"/>
    <property type="status" value="ALT_INIT"/>
    <property type="molecule type" value="Genomic_DNA"/>
</dbReference>
<dbReference type="PIR" id="E75397">
    <property type="entry name" value="E75397"/>
</dbReference>
<dbReference type="RefSeq" id="NP_295154.1">
    <property type="nucleotide sequence ID" value="NC_001263.1"/>
</dbReference>
<dbReference type="RefSeq" id="WP_027480053.1">
    <property type="nucleotide sequence ID" value="NC_001263.1"/>
</dbReference>
<dbReference type="SMR" id="Q9RUF5"/>
<dbReference type="FunCoup" id="Q9RUF5">
    <property type="interactions" value="429"/>
</dbReference>
<dbReference type="STRING" id="243230.DR_1431"/>
<dbReference type="PaxDb" id="243230-DR_1431"/>
<dbReference type="EnsemblBacteria" id="AAF10999">
    <property type="protein sequence ID" value="AAF10999"/>
    <property type="gene ID" value="DR_1431"/>
</dbReference>
<dbReference type="GeneID" id="69517672"/>
<dbReference type="KEGG" id="dra:DR_1431"/>
<dbReference type="PATRIC" id="fig|243230.17.peg.1627"/>
<dbReference type="eggNOG" id="COG0151">
    <property type="taxonomic scope" value="Bacteria"/>
</dbReference>
<dbReference type="HOGENOM" id="CLU_027420_3_0_0"/>
<dbReference type="InParanoid" id="Q9RUF5"/>
<dbReference type="OrthoDB" id="9807240at2"/>
<dbReference type="UniPathway" id="UPA00074">
    <property type="reaction ID" value="UER00125"/>
</dbReference>
<dbReference type="Proteomes" id="UP000002524">
    <property type="component" value="Chromosome 1"/>
</dbReference>
<dbReference type="GO" id="GO:0005524">
    <property type="term" value="F:ATP binding"/>
    <property type="evidence" value="ECO:0007669"/>
    <property type="project" value="UniProtKB-KW"/>
</dbReference>
<dbReference type="GO" id="GO:0046872">
    <property type="term" value="F:metal ion binding"/>
    <property type="evidence" value="ECO:0007669"/>
    <property type="project" value="UniProtKB-KW"/>
</dbReference>
<dbReference type="GO" id="GO:0004637">
    <property type="term" value="F:phosphoribosylamine-glycine ligase activity"/>
    <property type="evidence" value="ECO:0007669"/>
    <property type="project" value="UniProtKB-UniRule"/>
</dbReference>
<dbReference type="GO" id="GO:0006189">
    <property type="term" value="P:'de novo' IMP biosynthetic process"/>
    <property type="evidence" value="ECO:0007669"/>
    <property type="project" value="UniProtKB-UniRule"/>
</dbReference>
<dbReference type="GO" id="GO:0009113">
    <property type="term" value="P:purine nucleobase biosynthetic process"/>
    <property type="evidence" value="ECO:0007669"/>
    <property type="project" value="InterPro"/>
</dbReference>
<dbReference type="Gene3D" id="3.40.50.20">
    <property type="match status" value="1"/>
</dbReference>
<dbReference type="Gene3D" id="3.30.1490.20">
    <property type="entry name" value="ATP-grasp fold, A domain"/>
    <property type="match status" value="1"/>
</dbReference>
<dbReference type="Gene3D" id="3.30.470.20">
    <property type="entry name" value="ATP-grasp fold, B domain"/>
    <property type="match status" value="1"/>
</dbReference>
<dbReference type="Gene3D" id="3.90.600.10">
    <property type="entry name" value="Phosphoribosylglycinamide synthetase, C-terminal domain"/>
    <property type="match status" value="1"/>
</dbReference>
<dbReference type="HAMAP" id="MF_00138">
    <property type="entry name" value="GARS"/>
    <property type="match status" value="1"/>
</dbReference>
<dbReference type="InterPro" id="IPR011761">
    <property type="entry name" value="ATP-grasp"/>
</dbReference>
<dbReference type="InterPro" id="IPR013815">
    <property type="entry name" value="ATP_grasp_subdomain_1"/>
</dbReference>
<dbReference type="InterPro" id="IPR016185">
    <property type="entry name" value="PreATP-grasp_dom_sf"/>
</dbReference>
<dbReference type="InterPro" id="IPR020561">
    <property type="entry name" value="PRibGlycinamid_synth_ATP-grasp"/>
</dbReference>
<dbReference type="InterPro" id="IPR000115">
    <property type="entry name" value="PRibGlycinamide_synth"/>
</dbReference>
<dbReference type="InterPro" id="IPR020560">
    <property type="entry name" value="PRibGlycinamide_synth_C-dom"/>
</dbReference>
<dbReference type="InterPro" id="IPR037123">
    <property type="entry name" value="PRibGlycinamide_synth_C_sf"/>
</dbReference>
<dbReference type="InterPro" id="IPR020559">
    <property type="entry name" value="PRibGlycinamide_synth_CS"/>
</dbReference>
<dbReference type="InterPro" id="IPR020562">
    <property type="entry name" value="PRibGlycinamide_synth_N"/>
</dbReference>
<dbReference type="InterPro" id="IPR011054">
    <property type="entry name" value="Rudment_hybrid_motif"/>
</dbReference>
<dbReference type="NCBIfam" id="TIGR00877">
    <property type="entry name" value="purD"/>
    <property type="match status" value="1"/>
</dbReference>
<dbReference type="PANTHER" id="PTHR43472">
    <property type="entry name" value="PHOSPHORIBOSYLAMINE--GLYCINE LIGASE"/>
    <property type="match status" value="1"/>
</dbReference>
<dbReference type="PANTHER" id="PTHR43472:SF1">
    <property type="entry name" value="PHOSPHORIBOSYLAMINE--GLYCINE LIGASE, CHLOROPLASTIC"/>
    <property type="match status" value="1"/>
</dbReference>
<dbReference type="Pfam" id="PF01071">
    <property type="entry name" value="GARS_A"/>
    <property type="match status" value="1"/>
</dbReference>
<dbReference type="Pfam" id="PF02843">
    <property type="entry name" value="GARS_C"/>
    <property type="match status" value="1"/>
</dbReference>
<dbReference type="Pfam" id="PF02844">
    <property type="entry name" value="GARS_N"/>
    <property type="match status" value="1"/>
</dbReference>
<dbReference type="SMART" id="SM01209">
    <property type="entry name" value="GARS_A"/>
    <property type="match status" value="1"/>
</dbReference>
<dbReference type="SMART" id="SM01210">
    <property type="entry name" value="GARS_C"/>
    <property type="match status" value="1"/>
</dbReference>
<dbReference type="SUPFAM" id="SSF56059">
    <property type="entry name" value="Glutathione synthetase ATP-binding domain-like"/>
    <property type="match status" value="1"/>
</dbReference>
<dbReference type="SUPFAM" id="SSF52440">
    <property type="entry name" value="PreATP-grasp domain"/>
    <property type="match status" value="1"/>
</dbReference>
<dbReference type="SUPFAM" id="SSF51246">
    <property type="entry name" value="Rudiment single hybrid motif"/>
    <property type="match status" value="1"/>
</dbReference>
<dbReference type="PROSITE" id="PS50975">
    <property type="entry name" value="ATP_GRASP"/>
    <property type="match status" value="1"/>
</dbReference>
<dbReference type="PROSITE" id="PS00184">
    <property type="entry name" value="GARS"/>
    <property type="match status" value="1"/>
</dbReference>
<comment type="catalytic activity">
    <reaction evidence="2">
        <text>5-phospho-beta-D-ribosylamine + glycine + ATP = N(1)-(5-phospho-beta-D-ribosyl)glycinamide + ADP + phosphate + H(+)</text>
        <dbReference type="Rhea" id="RHEA:17453"/>
        <dbReference type="ChEBI" id="CHEBI:15378"/>
        <dbReference type="ChEBI" id="CHEBI:30616"/>
        <dbReference type="ChEBI" id="CHEBI:43474"/>
        <dbReference type="ChEBI" id="CHEBI:57305"/>
        <dbReference type="ChEBI" id="CHEBI:58681"/>
        <dbReference type="ChEBI" id="CHEBI:143788"/>
        <dbReference type="ChEBI" id="CHEBI:456216"/>
        <dbReference type="EC" id="6.3.4.13"/>
    </reaction>
</comment>
<comment type="cofactor">
    <cofactor evidence="1">
        <name>Mg(2+)</name>
        <dbReference type="ChEBI" id="CHEBI:18420"/>
    </cofactor>
    <cofactor evidence="1">
        <name>Mn(2+)</name>
        <dbReference type="ChEBI" id="CHEBI:29035"/>
    </cofactor>
    <text evidence="1">Binds 1 Mg(2+) or Mn(2+) ion per subunit.</text>
</comment>
<comment type="pathway">
    <text evidence="2">Purine metabolism; IMP biosynthesis via de novo pathway; N(1)-(5-phospho-D-ribosyl)glycinamide from 5-phospho-alpha-D-ribose 1-diphosphate: step 2/2.</text>
</comment>
<comment type="similarity">
    <text evidence="2">Belongs to the GARS family.</text>
</comment>
<comment type="sequence caution" evidence="3">
    <conflict type="erroneous initiation">
        <sequence resource="EMBL-CDS" id="AAF10999"/>
    </conflict>
</comment>
<gene>
    <name evidence="2" type="primary">purD</name>
    <name type="ordered locus">DR_1431</name>
</gene>
<keyword id="KW-0067">ATP-binding</keyword>
<keyword id="KW-0436">Ligase</keyword>
<keyword id="KW-0460">Magnesium</keyword>
<keyword id="KW-0464">Manganese</keyword>
<keyword id="KW-0479">Metal-binding</keyword>
<keyword id="KW-0547">Nucleotide-binding</keyword>
<keyword id="KW-0658">Purine biosynthesis</keyword>
<keyword id="KW-1185">Reference proteome</keyword>
<sequence length="415" mass="43351">MKVLVIGSGGREHAIVDACARAGHEVLCTPGNPGIAAQARLLASPQDAPTLADLAVREGADVVIVGPEAYLAAGVVDECERRGVPAFGPSQAASRLEGDKAWSKAFMVRHGIPTAQHRSFDTLDAALSHAATQTPPIVVKDAGLKAGKGVTIAHSVAEAEAALREIFTQTGAQAVIEDFMTGQEVSILALTDGKRYALTPPSQDHKTIYEGDTGPMTGGMGVICPFPVGEEQLNIIRRDIVEKTLAGMRAEGIPFRGVLYAGLMLTPQGPKVVEFNARFGDPEAEAVLPLLESDLAQHALDAARGQLDPAQVRFRDGASAVVILAAPGYPAEPRKGIVLDIPADSPEAKVFHAGTTERDGQLVSSGGRVLAVTGLGESREDALSRAYALADCIGFVGAQLRRDIGFRIGLGGKPN</sequence>
<protein>
    <recommendedName>
        <fullName evidence="2">Phosphoribosylamine--glycine ligase</fullName>
        <ecNumber evidence="2">6.3.4.13</ecNumber>
    </recommendedName>
    <alternativeName>
        <fullName evidence="2">GARS</fullName>
    </alternativeName>
    <alternativeName>
        <fullName evidence="2">Glycinamide ribonucleotide synthetase</fullName>
    </alternativeName>
    <alternativeName>
        <fullName evidence="2">Phosphoribosylglycinamide synthetase</fullName>
    </alternativeName>
</protein>